<sequence length="62" mass="6756">MLLIFQLALFAFIVVSFLLVVGVPVVLATPEGWAENKSTVFSGIGIWFLLVFLVGILNSFVV</sequence>
<organism>
    <name type="scientific">Chlorella vulgaris</name>
    <name type="common">Green alga</name>
    <dbReference type="NCBI Taxonomy" id="3077"/>
    <lineage>
        <taxon>Eukaryota</taxon>
        <taxon>Viridiplantae</taxon>
        <taxon>Chlorophyta</taxon>
        <taxon>core chlorophytes</taxon>
        <taxon>Trebouxiophyceae</taxon>
        <taxon>Chlorellales</taxon>
        <taxon>Chlorellaceae</taxon>
        <taxon>Chlorella clade</taxon>
        <taxon>Chlorella</taxon>
    </lineage>
</organism>
<reference key="1">
    <citation type="journal article" date="1997" name="Proc. Natl. Acad. Sci. U.S.A.">
        <title>Complete nucleotide sequence of the chloroplast genome from the green alga Chlorella vulgaris: the existence of genes possibly involved in chloroplast division.</title>
        <authorList>
            <person name="Wakasugi T."/>
            <person name="Nagai T."/>
            <person name="Kapoor M."/>
            <person name="Sugita M."/>
            <person name="Ito M."/>
            <person name="Ito S."/>
            <person name="Tsudzuki J."/>
            <person name="Nakashima K."/>
            <person name="Tsudzuki T."/>
            <person name="Suzuki Y."/>
            <person name="Hamada A."/>
            <person name="Ohta T."/>
            <person name="Inamura A."/>
            <person name="Yoshinaga K."/>
            <person name="Sugiura M."/>
        </authorList>
    </citation>
    <scope>NUCLEOTIDE SEQUENCE [LARGE SCALE GENOMIC DNA]</scope>
    <source>
        <strain>IAM C-27 / Tamiya</strain>
    </source>
</reference>
<dbReference type="EMBL" id="AB001684">
    <property type="protein sequence ID" value="BAA57897.1"/>
    <property type="molecule type" value="Genomic_DNA"/>
</dbReference>
<dbReference type="PIR" id="T07250">
    <property type="entry name" value="T07250"/>
</dbReference>
<dbReference type="RefSeq" id="NP_045822.1">
    <property type="nucleotide sequence ID" value="NC_001865.1"/>
</dbReference>
<dbReference type="SMR" id="P56313"/>
<dbReference type="GeneID" id="809180"/>
<dbReference type="GO" id="GO:0009535">
    <property type="term" value="C:chloroplast thylakoid membrane"/>
    <property type="evidence" value="ECO:0007669"/>
    <property type="project" value="UniProtKB-SubCell"/>
</dbReference>
<dbReference type="GO" id="GO:0009539">
    <property type="term" value="C:photosystem II reaction center"/>
    <property type="evidence" value="ECO:0007669"/>
    <property type="project" value="InterPro"/>
</dbReference>
<dbReference type="GO" id="GO:0015979">
    <property type="term" value="P:photosynthesis"/>
    <property type="evidence" value="ECO:0007669"/>
    <property type="project" value="UniProtKB-UniRule"/>
</dbReference>
<dbReference type="GO" id="GO:0042549">
    <property type="term" value="P:photosystem II stabilization"/>
    <property type="evidence" value="ECO:0007669"/>
    <property type="project" value="InterPro"/>
</dbReference>
<dbReference type="Gene3D" id="1.10.287.740">
    <property type="entry name" value="Photosystem II PsbZ, reaction centre"/>
    <property type="match status" value="1"/>
</dbReference>
<dbReference type="HAMAP" id="MF_00644">
    <property type="entry name" value="PSII_PsbZ"/>
    <property type="match status" value="1"/>
</dbReference>
<dbReference type="InterPro" id="IPR002644">
    <property type="entry name" value="PSII_PsbZ"/>
</dbReference>
<dbReference type="InterPro" id="IPR036512">
    <property type="entry name" value="PSII_PsbZ_sf"/>
</dbReference>
<dbReference type="NCBIfam" id="TIGR03043">
    <property type="entry name" value="PS_II_psbZ"/>
    <property type="match status" value="1"/>
</dbReference>
<dbReference type="PANTHER" id="PTHR34971">
    <property type="entry name" value="PHOTOSYSTEM II REACTION CENTER PROTEIN Z"/>
    <property type="match status" value="1"/>
</dbReference>
<dbReference type="PANTHER" id="PTHR34971:SF2">
    <property type="entry name" value="PHOTOSYSTEM II REACTION CENTER PROTEIN Z"/>
    <property type="match status" value="1"/>
</dbReference>
<dbReference type="Pfam" id="PF01737">
    <property type="entry name" value="Ycf9"/>
    <property type="match status" value="1"/>
</dbReference>
<dbReference type="SUPFAM" id="SSF161055">
    <property type="entry name" value="PsbZ-like"/>
    <property type="match status" value="1"/>
</dbReference>
<geneLocation type="chloroplast"/>
<keyword id="KW-0150">Chloroplast</keyword>
<keyword id="KW-0472">Membrane</keyword>
<keyword id="KW-0602">Photosynthesis</keyword>
<keyword id="KW-0604">Photosystem II</keyword>
<keyword id="KW-0934">Plastid</keyword>
<keyword id="KW-0674">Reaction center</keyword>
<keyword id="KW-0793">Thylakoid</keyword>
<keyword id="KW-0812">Transmembrane</keyword>
<keyword id="KW-1133">Transmembrane helix</keyword>
<evidence type="ECO:0000255" key="1">
    <source>
        <dbReference type="HAMAP-Rule" id="MF_00644"/>
    </source>
</evidence>
<gene>
    <name evidence="1" type="primary">psbZ</name>
    <name type="synonym">ycf9</name>
</gene>
<feature type="chain" id="PRO_0000217697" description="Photosystem II reaction center protein Z">
    <location>
        <begin position="1"/>
        <end position="62"/>
    </location>
</feature>
<feature type="transmembrane region" description="Helical" evidence="1">
    <location>
        <begin position="8"/>
        <end position="28"/>
    </location>
</feature>
<feature type="transmembrane region" description="Helical" evidence="1">
    <location>
        <begin position="41"/>
        <end position="61"/>
    </location>
</feature>
<protein>
    <recommendedName>
        <fullName evidence="1">Photosystem II reaction center protein Z</fullName>
        <shortName evidence="1">PSII-Z</shortName>
    </recommendedName>
</protein>
<proteinExistence type="inferred from homology"/>
<name>PSBZ_CHLVU</name>
<accession>P56313</accession>
<comment type="function">
    <text evidence="1">May control the interaction of photosystem II (PSII) cores with the light-harvesting antenna, regulates electron flow through the 2 photosystem reaction centers. PSII is a light-driven water plastoquinone oxidoreductase, using light energy to abstract electrons from H(2)O, generating a proton gradient subsequently used for ATP formation.</text>
</comment>
<comment type="subunit">
    <text evidence="1">PSII is composed of 1 copy each of membrane proteins PsbA, PsbB, PsbC, PsbD, PsbE, PsbF, PsbH, PsbI, PsbJ, PsbK, PsbL, PsbM, PsbT, PsbY, PsbZ, Psb30/Ycf12, at least 3 peripheral proteins of the oxygen-evolving complex and a large number of cofactors. It forms dimeric complexes.</text>
</comment>
<comment type="subcellular location">
    <subcellularLocation>
        <location evidence="1">Plastid</location>
        <location evidence="1">Chloroplast thylakoid membrane</location>
        <topology evidence="1">Multi-pass membrane protein</topology>
    </subcellularLocation>
</comment>
<comment type="similarity">
    <text evidence="1">Belongs to the PsbZ family.</text>
</comment>